<accession>Q9PEU0</accession>
<gene>
    <name evidence="1" type="primary">bamD</name>
    <name type="ordered locus">XF_0938</name>
</gene>
<comment type="function">
    <text evidence="1">Part of the outer membrane protein assembly complex, which is involved in assembly and insertion of beta-barrel proteins into the outer membrane.</text>
</comment>
<comment type="subunit">
    <text evidence="1">Part of the Bam complex.</text>
</comment>
<comment type="subcellular location">
    <subcellularLocation>
        <location evidence="1">Cell outer membrane</location>
        <topology evidence="1">Lipid-anchor</topology>
    </subcellularLocation>
</comment>
<comment type="similarity">
    <text evidence="1">Belongs to the BamD family.</text>
</comment>
<reference key="1">
    <citation type="journal article" date="2000" name="Nature">
        <title>The genome sequence of the plant pathogen Xylella fastidiosa.</title>
        <authorList>
            <person name="Simpson A.J.G."/>
            <person name="Reinach F.C."/>
            <person name="Arruda P."/>
            <person name="Abreu F.A."/>
            <person name="Acencio M."/>
            <person name="Alvarenga R."/>
            <person name="Alves L.M.C."/>
            <person name="Araya J.E."/>
            <person name="Baia G.S."/>
            <person name="Baptista C.S."/>
            <person name="Barros M.H."/>
            <person name="Bonaccorsi E.D."/>
            <person name="Bordin S."/>
            <person name="Bove J.M."/>
            <person name="Briones M.R.S."/>
            <person name="Bueno M.R.P."/>
            <person name="Camargo A.A."/>
            <person name="Camargo L.E.A."/>
            <person name="Carraro D.M."/>
            <person name="Carrer H."/>
            <person name="Colauto N.B."/>
            <person name="Colombo C."/>
            <person name="Costa F.F."/>
            <person name="Costa M.C.R."/>
            <person name="Costa-Neto C.M."/>
            <person name="Coutinho L.L."/>
            <person name="Cristofani M."/>
            <person name="Dias-Neto E."/>
            <person name="Docena C."/>
            <person name="El-Dorry H."/>
            <person name="Facincani A.P."/>
            <person name="Ferreira A.J.S."/>
            <person name="Ferreira V.C.A."/>
            <person name="Ferro J.A."/>
            <person name="Fraga J.S."/>
            <person name="Franca S.C."/>
            <person name="Franco M.C."/>
            <person name="Frohme M."/>
            <person name="Furlan L.R."/>
            <person name="Garnier M."/>
            <person name="Goldman G.H."/>
            <person name="Goldman M.H.S."/>
            <person name="Gomes S.L."/>
            <person name="Gruber A."/>
            <person name="Ho P.L."/>
            <person name="Hoheisel J.D."/>
            <person name="Junqueira M.L."/>
            <person name="Kemper E.L."/>
            <person name="Kitajima J.P."/>
            <person name="Krieger J.E."/>
            <person name="Kuramae E.E."/>
            <person name="Laigret F."/>
            <person name="Lambais M.R."/>
            <person name="Leite L.C.C."/>
            <person name="Lemos E.G.M."/>
            <person name="Lemos M.V.F."/>
            <person name="Lopes S.A."/>
            <person name="Lopes C.R."/>
            <person name="Machado J.A."/>
            <person name="Machado M.A."/>
            <person name="Madeira A.M.B.N."/>
            <person name="Madeira H.M.F."/>
            <person name="Marino C.L."/>
            <person name="Marques M.V."/>
            <person name="Martins E.A.L."/>
            <person name="Martins E.M.F."/>
            <person name="Matsukuma A.Y."/>
            <person name="Menck C.F.M."/>
            <person name="Miracca E.C."/>
            <person name="Miyaki C.Y."/>
            <person name="Monteiro-Vitorello C.B."/>
            <person name="Moon D.H."/>
            <person name="Nagai M.A."/>
            <person name="Nascimento A.L.T.O."/>
            <person name="Netto L.E.S."/>
            <person name="Nhani A. Jr."/>
            <person name="Nobrega F.G."/>
            <person name="Nunes L.R."/>
            <person name="Oliveira M.A."/>
            <person name="de Oliveira M.C."/>
            <person name="de Oliveira R.C."/>
            <person name="Palmieri D.A."/>
            <person name="Paris A."/>
            <person name="Peixoto B.R."/>
            <person name="Pereira G.A.G."/>
            <person name="Pereira H.A. Jr."/>
            <person name="Pesquero J.B."/>
            <person name="Quaggio R.B."/>
            <person name="Roberto P.G."/>
            <person name="Rodrigues V."/>
            <person name="de Rosa A.J.M."/>
            <person name="de Rosa V.E. Jr."/>
            <person name="de Sa R.G."/>
            <person name="Santelli R.V."/>
            <person name="Sawasaki H.E."/>
            <person name="da Silva A.C.R."/>
            <person name="da Silva A.M."/>
            <person name="da Silva F.R."/>
            <person name="Silva W.A. Jr."/>
            <person name="da Silveira J.F."/>
            <person name="Silvestri M.L.Z."/>
            <person name="Siqueira W.J."/>
            <person name="de Souza A.A."/>
            <person name="de Souza A.P."/>
            <person name="Terenzi M.F."/>
            <person name="Truffi D."/>
            <person name="Tsai S.M."/>
            <person name="Tsuhako M.H."/>
            <person name="Vallada H."/>
            <person name="Van Sluys M.A."/>
            <person name="Verjovski-Almeida S."/>
            <person name="Vettore A.L."/>
            <person name="Zago M.A."/>
            <person name="Zatz M."/>
            <person name="Meidanis J."/>
            <person name="Setubal J.C."/>
        </authorList>
    </citation>
    <scope>NUCLEOTIDE SEQUENCE [LARGE SCALE GENOMIC DNA]</scope>
    <source>
        <strain>9a5c</strain>
    </source>
</reference>
<proteinExistence type="inferred from homology"/>
<sequence>MIQRPTFFTPTHLLAMLLATFVLITGCHREAKKNADDGMPVEHLYDKAHTLMKKGNWAGAEVSFKRLIAQYPYGPYTEQAMVENAYAQYKSGKHDDAVSSIDRFIRTYPTHHNIPYLYYLRGLSNSNRDTIFLRKVWSLDLSRRDLSAPQQAYNDFKTVLDRYPNSRYAADAKKQMTELRNMFAQYEMNVTLYYLRRTAWVAAAGRANFLLETYPQSAFQYDAVAALGEAYTHLGNKTLADNARQVLQTNAPDHPWLKGKWPKYPAAIRKLNPFAGEKSAATGQINAVVDSN</sequence>
<keyword id="KW-0998">Cell outer membrane</keyword>
<keyword id="KW-0449">Lipoprotein</keyword>
<keyword id="KW-0472">Membrane</keyword>
<keyword id="KW-0564">Palmitate</keyword>
<keyword id="KW-0732">Signal</keyword>
<protein>
    <recommendedName>
        <fullName evidence="1">Outer membrane protein assembly factor BamD</fullName>
    </recommendedName>
</protein>
<feature type="signal peptide" evidence="1">
    <location>
        <begin position="1"/>
        <end position="26"/>
    </location>
</feature>
<feature type="chain" id="PRO_0000036234" description="Outer membrane protein assembly factor BamD">
    <location>
        <begin position="27"/>
        <end position="292"/>
    </location>
</feature>
<feature type="lipid moiety-binding region" description="N-palmitoyl cysteine" evidence="1">
    <location>
        <position position="27"/>
    </location>
</feature>
<feature type="lipid moiety-binding region" description="S-diacylglycerol cysteine" evidence="1">
    <location>
        <position position="27"/>
    </location>
</feature>
<dbReference type="EMBL" id="AE003849">
    <property type="protein sequence ID" value="AAF83748.1"/>
    <property type="molecule type" value="Genomic_DNA"/>
</dbReference>
<dbReference type="PIR" id="C82745">
    <property type="entry name" value="C82745"/>
</dbReference>
<dbReference type="RefSeq" id="WP_031337007.1">
    <property type="nucleotide sequence ID" value="NC_002488.3"/>
</dbReference>
<dbReference type="SMR" id="Q9PEU0"/>
<dbReference type="STRING" id="160492.XF_0938"/>
<dbReference type="KEGG" id="xfa:XF_0938"/>
<dbReference type="eggNOG" id="COG4105">
    <property type="taxonomic scope" value="Bacteria"/>
</dbReference>
<dbReference type="HOGENOM" id="CLU_065982_0_2_6"/>
<dbReference type="Proteomes" id="UP000000812">
    <property type="component" value="Chromosome"/>
</dbReference>
<dbReference type="GO" id="GO:1990063">
    <property type="term" value="C:Bam protein complex"/>
    <property type="evidence" value="ECO:0007669"/>
    <property type="project" value="TreeGrafter"/>
</dbReference>
<dbReference type="GO" id="GO:0043165">
    <property type="term" value="P:Gram-negative-bacterium-type cell outer membrane assembly"/>
    <property type="evidence" value="ECO:0007669"/>
    <property type="project" value="UniProtKB-UniRule"/>
</dbReference>
<dbReference type="GO" id="GO:0051205">
    <property type="term" value="P:protein insertion into membrane"/>
    <property type="evidence" value="ECO:0007669"/>
    <property type="project" value="UniProtKB-UniRule"/>
</dbReference>
<dbReference type="CDD" id="cd15830">
    <property type="entry name" value="BamD"/>
    <property type="match status" value="1"/>
</dbReference>
<dbReference type="Gene3D" id="1.25.40.10">
    <property type="entry name" value="Tetratricopeptide repeat domain"/>
    <property type="match status" value="1"/>
</dbReference>
<dbReference type="HAMAP" id="MF_00922">
    <property type="entry name" value="OM_assembly_BamD"/>
    <property type="match status" value="1"/>
</dbReference>
<dbReference type="InterPro" id="IPR017689">
    <property type="entry name" value="BamD"/>
</dbReference>
<dbReference type="InterPro" id="IPR039565">
    <property type="entry name" value="BamD-like"/>
</dbReference>
<dbReference type="InterPro" id="IPR011990">
    <property type="entry name" value="TPR-like_helical_dom_sf"/>
</dbReference>
<dbReference type="NCBIfam" id="TIGR03302">
    <property type="entry name" value="OM_YfiO"/>
    <property type="match status" value="1"/>
</dbReference>
<dbReference type="PANTHER" id="PTHR37423:SF1">
    <property type="entry name" value="OUTER MEMBRANE PROTEIN ASSEMBLY FACTOR BAMD"/>
    <property type="match status" value="1"/>
</dbReference>
<dbReference type="PANTHER" id="PTHR37423">
    <property type="entry name" value="SOLUBLE LYTIC MUREIN TRANSGLYCOSYLASE-RELATED"/>
    <property type="match status" value="1"/>
</dbReference>
<dbReference type="Pfam" id="PF13525">
    <property type="entry name" value="YfiO"/>
    <property type="match status" value="1"/>
</dbReference>
<dbReference type="SUPFAM" id="SSF48452">
    <property type="entry name" value="TPR-like"/>
    <property type="match status" value="1"/>
</dbReference>
<dbReference type="PROSITE" id="PS51257">
    <property type="entry name" value="PROKAR_LIPOPROTEIN"/>
    <property type="match status" value="1"/>
</dbReference>
<organism>
    <name type="scientific">Xylella fastidiosa (strain 9a5c)</name>
    <dbReference type="NCBI Taxonomy" id="160492"/>
    <lineage>
        <taxon>Bacteria</taxon>
        <taxon>Pseudomonadati</taxon>
        <taxon>Pseudomonadota</taxon>
        <taxon>Gammaproteobacteria</taxon>
        <taxon>Lysobacterales</taxon>
        <taxon>Lysobacteraceae</taxon>
        <taxon>Xylella</taxon>
    </lineage>
</organism>
<name>BAMD_XYLFA</name>
<evidence type="ECO:0000255" key="1">
    <source>
        <dbReference type="HAMAP-Rule" id="MF_00922"/>
    </source>
</evidence>